<reference key="1">
    <citation type="journal article" date="2004" name="Science">
        <title>Illuminating the evolutionary history of chlamydiae.</title>
        <authorList>
            <person name="Horn M."/>
            <person name="Collingro A."/>
            <person name="Schmitz-Esser S."/>
            <person name="Beier C.L."/>
            <person name="Purkhold U."/>
            <person name="Fartmann B."/>
            <person name="Brandt P."/>
            <person name="Nyakatura G.J."/>
            <person name="Droege M."/>
            <person name="Frishman D."/>
            <person name="Rattei T."/>
            <person name="Mewes H.-W."/>
            <person name="Wagner M."/>
        </authorList>
    </citation>
    <scope>NUCLEOTIDE SEQUENCE [LARGE SCALE GENOMIC DNA]</scope>
    <source>
        <strain>UWE25</strain>
    </source>
</reference>
<evidence type="ECO:0000255" key="1">
    <source>
        <dbReference type="HAMAP-Rule" id="MF_00473"/>
    </source>
</evidence>
<name>G6PI_PARUW</name>
<sequence>MEFRMSKTSPSHFFNYSASKKLQELAKHPLDLTKELTPERVTQYVAEAGGFKLLYGTERVTNDVLAALKQLSEESHALDKMNRMQDGEVMNFIERFPSENRPALHTATRDLFDYPRTAKKAQEAAQLAKAELEKLRQFLEKNDQNYHFTDLVTVAIGGSDLGPRAHYHALEHLLKPGHHVHFISNVDPDDVAGVFRKIPDLKRTLVAVVSKSGTTLETATNEELVREKFRQAGLDPKKHFVSITMPGTPMDNQEQYLKTFYMWDWIGGRYSTTSMCGALMLSFAFGINTFWEFLKGAHEMDRIALETNLNKNLPLLAALLGIWNRNFLDYPTVALIPYSQALLRYTAHIQQVDMESNGKHIDQQGIMTNFHTGPIIWGEPGTNSQHSFFQLIHQGTATVPVSIIAFKENLYGEDLEFQGTTSQEKLLSNLFAQSLALATGQISENPNKTFLGNRPTNILLAKKLTPYTLGALLSFFENKVAFQGFIWGINSFDQEGVQLGKVLANRLINEFANQRKKTKPSSFAIGEAYLKHLDHFS</sequence>
<accession>Q6MD44</accession>
<dbReference type="EC" id="5.3.1.9" evidence="1"/>
<dbReference type="EMBL" id="BX908798">
    <property type="protein sequence ID" value="CAF23505.1"/>
    <property type="molecule type" value="Genomic_DNA"/>
</dbReference>
<dbReference type="SMR" id="Q6MD44"/>
<dbReference type="STRING" id="264201.pc0781"/>
<dbReference type="KEGG" id="pcu:PC_RS03760"/>
<dbReference type="eggNOG" id="COG0166">
    <property type="taxonomic scope" value="Bacteria"/>
</dbReference>
<dbReference type="HOGENOM" id="CLU_017947_3_1_0"/>
<dbReference type="OrthoDB" id="140919at2"/>
<dbReference type="UniPathway" id="UPA00109">
    <property type="reaction ID" value="UER00181"/>
</dbReference>
<dbReference type="UniPathway" id="UPA00138"/>
<dbReference type="Proteomes" id="UP000000529">
    <property type="component" value="Chromosome"/>
</dbReference>
<dbReference type="GO" id="GO:0005829">
    <property type="term" value="C:cytosol"/>
    <property type="evidence" value="ECO:0007669"/>
    <property type="project" value="TreeGrafter"/>
</dbReference>
<dbReference type="GO" id="GO:0097367">
    <property type="term" value="F:carbohydrate derivative binding"/>
    <property type="evidence" value="ECO:0007669"/>
    <property type="project" value="InterPro"/>
</dbReference>
<dbReference type="GO" id="GO:0004347">
    <property type="term" value="F:glucose-6-phosphate isomerase activity"/>
    <property type="evidence" value="ECO:0007669"/>
    <property type="project" value="UniProtKB-UniRule"/>
</dbReference>
<dbReference type="GO" id="GO:0048029">
    <property type="term" value="F:monosaccharide binding"/>
    <property type="evidence" value="ECO:0007669"/>
    <property type="project" value="TreeGrafter"/>
</dbReference>
<dbReference type="GO" id="GO:0006094">
    <property type="term" value="P:gluconeogenesis"/>
    <property type="evidence" value="ECO:0007669"/>
    <property type="project" value="UniProtKB-UniRule"/>
</dbReference>
<dbReference type="GO" id="GO:0051156">
    <property type="term" value="P:glucose 6-phosphate metabolic process"/>
    <property type="evidence" value="ECO:0007669"/>
    <property type="project" value="TreeGrafter"/>
</dbReference>
<dbReference type="GO" id="GO:0006096">
    <property type="term" value="P:glycolytic process"/>
    <property type="evidence" value="ECO:0007669"/>
    <property type="project" value="UniProtKB-UniRule"/>
</dbReference>
<dbReference type="CDD" id="cd05015">
    <property type="entry name" value="SIS_PGI_1"/>
    <property type="match status" value="1"/>
</dbReference>
<dbReference type="CDD" id="cd05016">
    <property type="entry name" value="SIS_PGI_2"/>
    <property type="match status" value="1"/>
</dbReference>
<dbReference type="Gene3D" id="1.10.1390.10">
    <property type="match status" value="1"/>
</dbReference>
<dbReference type="Gene3D" id="3.40.50.10490">
    <property type="entry name" value="Glucose-6-phosphate isomerase like protein, domain 1"/>
    <property type="match status" value="2"/>
</dbReference>
<dbReference type="HAMAP" id="MF_00473">
    <property type="entry name" value="G6P_isomerase"/>
    <property type="match status" value="1"/>
</dbReference>
<dbReference type="InterPro" id="IPR001672">
    <property type="entry name" value="G6P_Isomerase"/>
</dbReference>
<dbReference type="InterPro" id="IPR023096">
    <property type="entry name" value="G6P_Isomerase_C"/>
</dbReference>
<dbReference type="InterPro" id="IPR018189">
    <property type="entry name" value="Phosphoglucose_isomerase_CS"/>
</dbReference>
<dbReference type="InterPro" id="IPR046348">
    <property type="entry name" value="SIS_dom_sf"/>
</dbReference>
<dbReference type="InterPro" id="IPR035476">
    <property type="entry name" value="SIS_PGI_1"/>
</dbReference>
<dbReference type="InterPro" id="IPR035482">
    <property type="entry name" value="SIS_PGI_2"/>
</dbReference>
<dbReference type="NCBIfam" id="NF010695">
    <property type="entry name" value="PRK14095.1"/>
    <property type="match status" value="1"/>
</dbReference>
<dbReference type="PANTHER" id="PTHR11469">
    <property type="entry name" value="GLUCOSE-6-PHOSPHATE ISOMERASE"/>
    <property type="match status" value="1"/>
</dbReference>
<dbReference type="PANTHER" id="PTHR11469:SF1">
    <property type="entry name" value="GLUCOSE-6-PHOSPHATE ISOMERASE"/>
    <property type="match status" value="1"/>
</dbReference>
<dbReference type="Pfam" id="PF00342">
    <property type="entry name" value="PGI"/>
    <property type="match status" value="1"/>
</dbReference>
<dbReference type="PRINTS" id="PR00662">
    <property type="entry name" value="G6PISOMERASE"/>
</dbReference>
<dbReference type="SUPFAM" id="SSF53697">
    <property type="entry name" value="SIS domain"/>
    <property type="match status" value="1"/>
</dbReference>
<dbReference type="PROSITE" id="PS00174">
    <property type="entry name" value="P_GLUCOSE_ISOMERASE_2"/>
    <property type="match status" value="1"/>
</dbReference>
<dbReference type="PROSITE" id="PS51463">
    <property type="entry name" value="P_GLUCOSE_ISOMERASE_3"/>
    <property type="match status" value="1"/>
</dbReference>
<organism>
    <name type="scientific">Protochlamydia amoebophila (strain UWE25)</name>
    <dbReference type="NCBI Taxonomy" id="264201"/>
    <lineage>
        <taxon>Bacteria</taxon>
        <taxon>Pseudomonadati</taxon>
        <taxon>Chlamydiota</taxon>
        <taxon>Chlamydiia</taxon>
        <taxon>Parachlamydiales</taxon>
        <taxon>Parachlamydiaceae</taxon>
        <taxon>Candidatus Protochlamydia</taxon>
    </lineage>
</organism>
<feature type="chain" id="PRO_0000180699" description="Glucose-6-phosphate isomerase">
    <location>
        <begin position="1"/>
        <end position="537"/>
    </location>
</feature>
<feature type="active site" description="Proton donor" evidence="1">
    <location>
        <position position="355"/>
    </location>
</feature>
<feature type="active site" evidence="1">
    <location>
        <position position="386"/>
    </location>
</feature>
<feature type="active site" evidence="1">
    <location>
        <position position="501"/>
    </location>
</feature>
<protein>
    <recommendedName>
        <fullName evidence="1">Glucose-6-phosphate isomerase</fullName>
        <shortName evidence="1">GPI</shortName>
        <ecNumber evidence="1">5.3.1.9</ecNumber>
    </recommendedName>
    <alternativeName>
        <fullName evidence="1">Phosphoglucose isomerase</fullName>
        <shortName evidence="1">PGI</shortName>
    </alternativeName>
    <alternativeName>
        <fullName evidence="1">Phosphohexose isomerase</fullName>
        <shortName evidence="1">PHI</shortName>
    </alternativeName>
</protein>
<proteinExistence type="inferred from homology"/>
<gene>
    <name evidence="1" type="primary">pgi</name>
    <name type="ordered locus">pc0781</name>
</gene>
<comment type="function">
    <text evidence="1">Catalyzes the reversible isomerization of glucose-6-phosphate to fructose-6-phosphate.</text>
</comment>
<comment type="catalytic activity">
    <reaction evidence="1">
        <text>alpha-D-glucose 6-phosphate = beta-D-fructose 6-phosphate</text>
        <dbReference type="Rhea" id="RHEA:11816"/>
        <dbReference type="ChEBI" id="CHEBI:57634"/>
        <dbReference type="ChEBI" id="CHEBI:58225"/>
        <dbReference type="EC" id="5.3.1.9"/>
    </reaction>
</comment>
<comment type="pathway">
    <text evidence="1">Carbohydrate biosynthesis; gluconeogenesis.</text>
</comment>
<comment type="pathway">
    <text evidence="1">Carbohydrate degradation; glycolysis; D-glyceraldehyde 3-phosphate and glycerone phosphate from D-glucose: step 2/4.</text>
</comment>
<comment type="subcellular location">
    <subcellularLocation>
        <location evidence="1">Cytoplasm</location>
    </subcellularLocation>
</comment>
<comment type="similarity">
    <text evidence="1">Belongs to the GPI family.</text>
</comment>
<keyword id="KW-0963">Cytoplasm</keyword>
<keyword id="KW-0312">Gluconeogenesis</keyword>
<keyword id="KW-0324">Glycolysis</keyword>
<keyword id="KW-0413">Isomerase</keyword>
<keyword id="KW-1185">Reference proteome</keyword>